<keyword id="KW-0002">3D-structure</keyword>
<keyword id="KW-0037">Angiogenesis</keyword>
<keyword id="KW-0963">Cytoplasm</keyword>
<keyword id="KW-0217">Developmental protein</keyword>
<keyword id="KW-0221">Differentiation</keyword>
<keyword id="KW-1015">Disulfide bond</keyword>
<keyword id="KW-0238">DNA-binding</keyword>
<keyword id="KW-0255">Endonuclease</keyword>
<keyword id="KW-0378">Hydrolase</keyword>
<keyword id="KW-0540">Nuclease</keyword>
<keyword id="KW-0539">Nucleus</keyword>
<keyword id="KW-0652">Protein synthesis inhibitor</keyword>
<keyword id="KW-0873">Pyrrolidone carboxylic acid</keyword>
<keyword id="KW-1185">Reference proteome</keyword>
<keyword id="KW-0964">Secreted</keyword>
<keyword id="KW-0732">Signal</keyword>
<keyword id="KW-0346">Stress response</keyword>
<organism>
    <name type="scientific">Gorilla gorilla gorilla</name>
    <name type="common">Western lowland gorilla</name>
    <dbReference type="NCBI Taxonomy" id="9595"/>
    <lineage>
        <taxon>Eukaryota</taxon>
        <taxon>Metazoa</taxon>
        <taxon>Chordata</taxon>
        <taxon>Craniata</taxon>
        <taxon>Vertebrata</taxon>
        <taxon>Euteleostomi</taxon>
        <taxon>Mammalia</taxon>
        <taxon>Eutheria</taxon>
        <taxon>Euarchontoglires</taxon>
        <taxon>Primates</taxon>
        <taxon>Haplorrhini</taxon>
        <taxon>Catarrhini</taxon>
        <taxon>Hominidae</taxon>
        <taxon>Gorilla</taxon>
    </lineage>
</organism>
<comment type="function">
    <text evidence="1 2">Secreted ribonuclease that can either promote or restrict cell proliferation of target cells, depending on the context. Endocytosed in target cells via its receptor PLXNB2 and translocates to the cytoplasm or nucleus. Under stress conditions, localizes to the cytoplasm and promotes the assembly of stress granules (SGs): specifically cleaves a subset of tRNAs within anticodon loops to produce tRNA-derived stress-induced fragments (tiRNAs), resulting in translation repression and inhibition of cell proliferation (By similarity). tiRNas also prevent formation of apoptosome, thereby promoting cell survival (By similarity). Preferentially cleaves RNAs between a pyrimidine and an adenosine residue, suggesting that it cleaves the anticodon loop of tRNA(Ala) (32-UUAGCAU-38) after positions 33 and 36. Cleaves a subset of tRNAs, including tRNA(Ala), tRNA(Glu), tRNA(Gly), tRNA(Lys), tRNA(Val), tRNA(His), tRNA(Asp) and tRNA(Sec). Under growth conditions and in differentiated cells, translocates to the nucleus and stimulates ribosomal RNA (rRNA) transcription, including that containing the initiation site sequences of 45S rRNA, thereby promoting cell growth and proliferation. Angiogenin induces vascularization of normal and malignant tissues via its ability to promote rRNA transcription. Involved in hematopoietic stem and progenitor cell (HSPC) growth and survival by promoting rRNA transcription in growth conditions and inhibiting translation in response to stress, respectively. Mediates the crosstalk between myeloid and intestinal epithelial cells to protect the intestinal epithelial barrier integrity: secreted by myeloid cells and promotes intestinal epithelial cells proliferation and survival (By similarity). Also mediates osteoclast-endothelial cell crosstalk in growing bone: produced by osteoclasts and protects the neighboring vascular cells against senescence by promoting rRNA transcription (By similarity).</text>
</comment>
<comment type="activity regulation">
    <text evidence="1">Has weak tRNA ribonuclease activity by itself due to partial autoinhibition by its C-terminus, which folds into a short alpha-helix that partially occludes the substrate-binding site. In absence of stress, the ribonuclease activity is inhibited by RNH1 in the cytoplasm. In response to stress, dissociates from RNH1 in the cytoplasm and associates with cytoplasmic ribosomes with vacant A-sites: ribosomes directly activate the tRNA ribonuclease activity of ANG by refolding the C-terminal alpha-helix. In response to stress, the angiogenic activity of ANG is inhibited by RNH1 in the nucleus.</text>
</comment>
<comment type="subunit">
    <text evidence="1">Homodimer. Interacts with RNH1; inhibiting ANG ribonuclease activity. Interacts with PCNA.</text>
</comment>
<comment type="subcellular location">
    <subcellularLocation>
        <location evidence="1">Secreted</location>
    </subcellularLocation>
    <subcellularLocation>
        <location evidence="1">Nucleus</location>
    </subcellularLocation>
    <subcellularLocation>
        <location evidence="1">Nucleus</location>
        <location evidence="1">Nucleolus</location>
    </subcellularLocation>
    <subcellularLocation>
        <location evidence="1">Cytoplasm</location>
        <location evidence="1">Stress granule</location>
    </subcellularLocation>
    <text evidence="1">The secreted protein is rapidly endocytosed by target cells following interaction with PLXNB2 receptor and translocated to the cytoplasm and nucleus. In the nucleus, accumulates in the nucleolus and binds to DNA.</text>
</comment>
<comment type="similarity">
    <text evidence="3">Belongs to the pancreatic ribonuclease family.</text>
</comment>
<evidence type="ECO:0000250" key="1">
    <source>
        <dbReference type="UniProtKB" id="P03950"/>
    </source>
</evidence>
<evidence type="ECO:0000250" key="2">
    <source>
        <dbReference type="UniProtKB" id="P21570"/>
    </source>
</evidence>
<evidence type="ECO:0000305" key="3"/>
<protein>
    <recommendedName>
        <fullName>Angiogenin</fullName>
        <ecNumber evidence="1">3.1.27.-</ecNumber>
    </recommendedName>
    <alternativeName>
        <fullName>Ribonuclease 5</fullName>
        <shortName>RNase 5</shortName>
    </alternativeName>
</protein>
<dbReference type="EC" id="3.1.27.-" evidence="1"/>
<dbReference type="EMBL" id="AF441662">
    <property type="protein sequence ID" value="AAL61644.1"/>
    <property type="molecule type" value="Genomic_DNA"/>
</dbReference>
<dbReference type="PDB" id="8OO3">
    <property type="method" value="X-ray"/>
    <property type="resolution" value="1.76 A"/>
    <property type="chains" value="AAA=25-147"/>
</dbReference>
<dbReference type="PDB" id="8OO4">
    <property type="method" value="X-ray"/>
    <property type="resolution" value="1.99 A"/>
    <property type="chains" value="AAA=25-147"/>
</dbReference>
<dbReference type="PDBsum" id="8OO3"/>
<dbReference type="PDBsum" id="8OO4"/>
<dbReference type="SMR" id="Q71MJ0"/>
<dbReference type="FunCoup" id="Q71MJ0">
    <property type="interactions" value="153"/>
</dbReference>
<dbReference type="STRING" id="9593.ENSGGOP00000035667"/>
<dbReference type="eggNOG" id="ENOG502S9Q1">
    <property type="taxonomic scope" value="Eukaryota"/>
</dbReference>
<dbReference type="InParanoid" id="Q71MJ0"/>
<dbReference type="Proteomes" id="UP000001519">
    <property type="component" value="Unplaced"/>
</dbReference>
<dbReference type="GO" id="GO:0032311">
    <property type="term" value="C:angiogenin-PRI complex"/>
    <property type="evidence" value="ECO:0000250"/>
    <property type="project" value="UniProtKB"/>
</dbReference>
<dbReference type="GO" id="GO:0005604">
    <property type="term" value="C:basement membrane"/>
    <property type="evidence" value="ECO:0000250"/>
    <property type="project" value="UniProtKB"/>
</dbReference>
<dbReference type="GO" id="GO:0010494">
    <property type="term" value="C:cytoplasmic stress granule"/>
    <property type="evidence" value="ECO:0007669"/>
    <property type="project" value="UniProtKB-SubCell"/>
</dbReference>
<dbReference type="GO" id="GO:0005615">
    <property type="term" value="C:extracellular space"/>
    <property type="evidence" value="ECO:0000250"/>
    <property type="project" value="UniProtKB"/>
</dbReference>
<dbReference type="GO" id="GO:0005730">
    <property type="term" value="C:nucleolus"/>
    <property type="evidence" value="ECO:0000250"/>
    <property type="project" value="UniProtKB"/>
</dbReference>
<dbReference type="GO" id="GO:0005634">
    <property type="term" value="C:nucleus"/>
    <property type="evidence" value="ECO:0000250"/>
    <property type="project" value="UniProtKB"/>
</dbReference>
<dbReference type="GO" id="GO:0003779">
    <property type="term" value="F:actin binding"/>
    <property type="evidence" value="ECO:0000250"/>
    <property type="project" value="UniProtKB"/>
</dbReference>
<dbReference type="GO" id="GO:0005507">
    <property type="term" value="F:copper ion binding"/>
    <property type="evidence" value="ECO:0000250"/>
    <property type="project" value="UniProtKB"/>
</dbReference>
<dbReference type="GO" id="GO:0003677">
    <property type="term" value="F:DNA binding"/>
    <property type="evidence" value="ECO:0007669"/>
    <property type="project" value="UniProtKB-KW"/>
</dbReference>
<dbReference type="GO" id="GO:0004519">
    <property type="term" value="F:endonuclease activity"/>
    <property type="evidence" value="ECO:0007669"/>
    <property type="project" value="UniProtKB-KW"/>
</dbReference>
<dbReference type="GO" id="GO:0008201">
    <property type="term" value="F:heparin binding"/>
    <property type="evidence" value="ECO:0000250"/>
    <property type="project" value="UniProtKB"/>
</dbReference>
<dbReference type="GO" id="GO:0042803">
    <property type="term" value="F:protein homodimerization activity"/>
    <property type="evidence" value="ECO:0000250"/>
    <property type="project" value="UniProtKB"/>
</dbReference>
<dbReference type="GO" id="GO:0004540">
    <property type="term" value="F:RNA nuclease activity"/>
    <property type="evidence" value="ECO:0000250"/>
    <property type="project" value="UniProtKB"/>
</dbReference>
<dbReference type="GO" id="GO:0005102">
    <property type="term" value="F:signaling receptor binding"/>
    <property type="evidence" value="ECO:0000250"/>
    <property type="project" value="UniProtKB"/>
</dbReference>
<dbReference type="GO" id="GO:0030041">
    <property type="term" value="P:actin filament polymerization"/>
    <property type="evidence" value="ECO:0000250"/>
    <property type="project" value="UniProtKB"/>
</dbReference>
<dbReference type="GO" id="GO:0001525">
    <property type="term" value="P:angiogenesis"/>
    <property type="evidence" value="ECO:0000250"/>
    <property type="project" value="UniProtKB"/>
</dbReference>
<dbReference type="GO" id="GO:0019731">
    <property type="term" value="P:antibacterial humoral response"/>
    <property type="evidence" value="ECO:0000318"/>
    <property type="project" value="GO_Central"/>
</dbReference>
<dbReference type="GO" id="GO:0061844">
    <property type="term" value="P:antimicrobial humoral immune response mediated by antimicrobial peptide"/>
    <property type="evidence" value="ECO:0000318"/>
    <property type="project" value="GO_Central"/>
</dbReference>
<dbReference type="GO" id="GO:0050830">
    <property type="term" value="P:defense response to Gram-positive bacterium"/>
    <property type="evidence" value="ECO:0000318"/>
    <property type="project" value="GO_Central"/>
</dbReference>
<dbReference type="GO" id="GO:0071425">
    <property type="term" value="P:hematopoietic stem cell proliferation"/>
    <property type="evidence" value="ECO:0000250"/>
    <property type="project" value="UniProtKB"/>
</dbReference>
<dbReference type="GO" id="GO:0045087">
    <property type="term" value="P:innate immune response"/>
    <property type="evidence" value="ECO:0000318"/>
    <property type="project" value="GO_Central"/>
</dbReference>
<dbReference type="GO" id="GO:0043066">
    <property type="term" value="P:negative regulation of apoptotic process"/>
    <property type="evidence" value="ECO:0000250"/>
    <property type="project" value="UniProtKB"/>
</dbReference>
<dbReference type="GO" id="GO:0048662">
    <property type="term" value="P:negative regulation of smooth muscle cell proliferation"/>
    <property type="evidence" value="ECO:0000250"/>
    <property type="project" value="UniProtKB"/>
</dbReference>
<dbReference type="GO" id="GO:0017148">
    <property type="term" value="P:negative regulation of translation"/>
    <property type="evidence" value="ECO:0007669"/>
    <property type="project" value="UniProtKB-KW"/>
</dbReference>
<dbReference type="GO" id="GO:0001938">
    <property type="term" value="P:positive regulation of endothelial cell proliferation"/>
    <property type="evidence" value="ECO:0000250"/>
    <property type="project" value="UniProtKB"/>
</dbReference>
<dbReference type="GO" id="GO:0050714">
    <property type="term" value="P:positive regulation of protein secretion"/>
    <property type="evidence" value="ECO:0000250"/>
    <property type="project" value="UniProtKB"/>
</dbReference>
<dbReference type="GO" id="GO:0001666">
    <property type="term" value="P:response to hypoxia"/>
    <property type="evidence" value="ECO:0000250"/>
    <property type="project" value="UniProtKB"/>
</dbReference>
<dbReference type="GO" id="GO:0009303">
    <property type="term" value="P:rRNA transcription"/>
    <property type="evidence" value="ECO:0000250"/>
    <property type="project" value="UniProtKB"/>
</dbReference>
<dbReference type="GO" id="GO:0023052">
    <property type="term" value="P:signaling"/>
    <property type="evidence" value="ECO:0000250"/>
    <property type="project" value="UniProtKB"/>
</dbReference>
<dbReference type="CDD" id="cd06265">
    <property type="entry name" value="RNase_A_canonical"/>
    <property type="match status" value="1"/>
</dbReference>
<dbReference type="FunFam" id="3.10.130.10:FF:000001">
    <property type="entry name" value="Ribonuclease pancreatic"/>
    <property type="match status" value="1"/>
</dbReference>
<dbReference type="Gene3D" id="3.10.130.10">
    <property type="entry name" value="Ribonuclease A-like domain"/>
    <property type="match status" value="1"/>
</dbReference>
<dbReference type="InterPro" id="IPR001427">
    <property type="entry name" value="RNaseA"/>
</dbReference>
<dbReference type="InterPro" id="IPR036816">
    <property type="entry name" value="RNaseA-like_dom_sf"/>
</dbReference>
<dbReference type="InterPro" id="IPR023411">
    <property type="entry name" value="RNaseA_AS"/>
</dbReference>
<dbReference type="InterPro" id="IPR023412">
    <property type="entry name" value="RNaseA_domain"/>
</dbReference>
<dbReference type="PANTHER" id="PTHR11437:SF60">
    <property type="entry name" value="ANGIOGENIN"/>
    <property type="match status" value="1"/>
</dbReference>
<dbReference type="PANTHER" id="PTHR11437">
    <property type="entry name" value="RIBONUCLEASE"/>
    <property type="match status" value="1"/>
</dbReference>
<dbReference type="Pfam" id="PF00074">
    <property type="entry name" value="RnaseA"/>
    <property type="match status" value="1"/>
</dbReference>
<dbReference type="PRINTS" id="PR00794">
    <property type="entry name" value="RIBONUCLEASE"/>
</dbReference>
<dbReference type="SMART" id="SM00092">
    <property type="entry name" value="RNAse_Pc"/>
    <property type="match status" value="1"/>
</dbReference>
<dbReference type="SUPFAM" id="SSF54076">
    <property type="entry name" value="RNase A-like"/>
    <property type="match status" value="1"/>
</dbReference>
<dbReference type="PROSITE" id="PS00127">
    <property type="entry name" value="RNASE_PANCREATIC"/>
    <property type="match status" value="1"/>
</dbReference>
<accession>Q71MJ0</accession>
<sequence>MVMGLGVLLLVFVLGLGLTPPTLAQDNSRYTHFLTQHYDAKPQGRDDRYCESIMRRRGLTSPCKDINTFIHGNKRSIKAICENKNGNPHRENLRISKSSFQVTTCKLHGGSPWPPCQYRATAGFRNVVVACENGLPVHLDQSIFRRP</sequence>
<reference key="1">
    <citation type="journal article" date="2002" name="Mol. Biol. Evol.">
        <title>Diversifying selection of the tumor-growth promoter angiogenin in primate evolution.</title>
        <authorList>
            <person name="Zhang J."/>
            <person name="Rosenberg H.F."/>
        </authorList>
    </citation>
    <scope>NUCLEOTIDE SEQUENCE [GENOMIC DNA]</scope>
</reference>
<gene>
    <name type="primary">ANG</name>
    <name type="synonym">RNASE5</name>
</gene>
<name>ANGI_GORGO</name>
<feature type="signal peptide" evidence="1">
    <location>
        <begin position="1"/>
        <end position="24"/>
    </location>
</feature>
<feature type="chain" id="PRO_0000030842" description="Angiogenin">
    <location>
        <begin position="25"/>
        <end position="147"/>
    </location>
</feature>
<feature type="short sequence motif" description="Nucleolar localization signal" evidence="1">
    <location>
        <begin position="55"/>
        <end position="59"/>
    </location>
</feature>
<feature type="active site" description="Proton acceptor" evidence="1">
    <location>
        <position position="37"/>
    </location>
</feature>
<feature type="active site" description="Proton donor" evidence="1">
    <location>
        <position position="138"/>
    </location>
</feature>
<feature type="binding site" evidence="1">
    <location>
        <position position="45"/>
    </location>
    <ligand>
        <name>tRNA</name>
        <dbReference type="ChEBI" id="CHEBI:17843"/>
    </ligand>
</feature>
<feature type="binding site" evidence="1">
    <location>
        <position position="46"/>
    </location>
    <ligand>
        <name>tRNA</name>
        <dbReference type="ChEBI" id="CHEBI:17843"/>
    </ligand>
</feature>
<feature type="binding site" evidence="1">
    <location>
        <position position="105"/>
    </location>
    <ligand>
        <name>tRNA</name>
        <dbReference type="ChEBI" id="CHEBI:17843"/>
    </ligand>
</feature>
<feature type="binding site" evidence="1">
    <location>
        <position position="127"/>
    </location>
    <ligand>
        <name>tRNA</name>
        <dbReference type="ChEBI" id="CHEBI:17843"/>
    </ligand>
</feature>
<feature type="modified residue" description="Pyrrolidone carboxylic acid" evidence="1">
    <location>
        <position position="25"/>
    </location>
</feature>
<feature type="disulfide bond" evidence="1">
    <location>
        <begin position="50"/>
        <end position="105"/>
    </location>
</feature>
<feature type="disulfide bond" evidence="1">
    <location>
        <begin position="63"/>
        <end position="116"/>
    </location>
</feature>
<feature type="disulfide bond" evidence="1">
    <location>
        <begin position="81"/>
        <end position="131"/>
    </location>
</feature>
<proteinExistence type="evidence at protein level"/>